<gene>
    <name evidence="2" type="primary">HS6ST1</name>
    <name type="synonym">6OST1</name>
</gene>
<sequence length="401" mass="47080">MVERASKFVLVVAGSACFMLILYQYAGPGLSLGAPGGRAPPDDLDLFPTPDPHYEKKYYFPVRELERSLRFDMKGDDVIVFLHIQKTGGTTFGRHLVQNVRLEVPCDCRPGQKKCTCYRPNRRETWLFSRFSTGWSCGLHADWTELTNCVPGVLDRRDPAGLRSPRKFYYITLLRDPVSRYLSEWRHVQRGATWKTSLHMCDGRTPTPEELPPCYEGTDWSGCTLQEFMDCPYNLANNRQVRMLADLSLVGCYNLSFIPESKRAQLLLESAKKNLRGMAFFGLTEFQRKTQYLFERTFNLKFIRPFMQYNSTRAGGVEVDEDTIRHIEELNDLDMQLYDYAKDLFQQRYQYKRQLERREQRLRNREERLLHRSKEALPREDTEEPGRVPTEDYMSHIIEKW</sequence>
<feature type="chain" id="PRO_0000190800" description="Heparan-sulfate 6-O-sulfotransferase 1">
    <location>
        <begin position="1"/>
        <end position="401"/>
    </location>
</feature>
<feature type="topological domain" description="Cytoplasmic" evidence="3">
    <location>
        <begin position="1"/>
        <end position="4"/>
    </location>
</feature>
<feature type="transmembrane region" description="Helical; Signal-anchor for type II membrane protein" evidence="3">
    <location>
        <begin position="5"/>
        <end position="27"/>
    </location>
</feature>
<feature type="topological domain" description="Lumenal" evidence="3">
    <location>
        <begin position="28"/>
        <end position="401"/>
    </location>
</feature>
<feature type="region of interest" description="Disordered" evidence="4">
    <location>
        <begin position="367"/>
        <end position="389"/>
    </location>
</feature>
<feature type="active site" description="Proton acceptor" evidence="1">
    <location>
        <position position="140"/>
    </location>
</feature>
<feature type="binding site" evidence="1">
    <location>
        <begin position="83"/>
        <end position="91"/>
    </location>
    <ligand>
        <name>3'-phosphoadenylyl sulfate</name>
        <dbReference type="ChEBI" id="CHEBI:58339"/>
    </ligand>
</feature>
<feature type="binding site" evidence="1">
    <location>
        <begin position="113"/>
        <end position="114"/>
    </location>
    <ligand>
        <name>substrate</name>
    </ligand>
</feature>
<feature type="binding site" evidence="1">
    <location>
        <position position="130"/>
    </location>
    <ligand>
        <name>substrate</name>
    </ligand>
</feature>
<feature type="binding site" evidence="1">
    <location>
        <position position="135"/>
    </location>
    <ligand>
        <name>substrate</name>
    </ligand>
</feature>
<feature type="binding site" evidence="1">
    <location>
        <position position="140"/>
    </location>
    <ligand>
        <name>substrate</name>
    </ligand>
</feature>
<feature type="binding site" evidence="1">
    <location>
        <position position="175"/>
    </location>
    <ligand>
        <name>3'-phosphoadenylyl sulfate</name>
        <dbReference type="ChEBI" id="CHEBI:58339"/>
    </ligand>
</feature>
<feature type="binding site" evidence="1">
    <location>
        <position position="183"/>
    </location>
    <ligand>
        <name>3'-phosphoadenylyl sulfate</name>
        <dbReference type="ChEBI" id="CHEBI:58339"/>
    </ligand>
</feature>
<feature type="binding site" evidence="1">
    <location>
        <position position="187"/>
    </location>
    <ligand>
        <name>substrate</name>
    </ligand>
</feature>
<feature type="binding site" evidence="1">
    <location>
        <position position="194"/>
    </location>
    <ligand>
        <name>substrate</name>
    </ligand>
</feature>
<feature type="binding site" evidence="1">
    <location>
        <begin position="307"/>
        <end position="309"/>
    </location>
    <ligand>
        <name>3'-phosphoadenylyl sulfate</name>
        <dbReference type="ChEBI" id="CHEBI:58339"/>
    </ligand>
</feature>
<feature type="binding site" evidence="1">
    <location>
        <begin position="313"/>
        <end position="314"/>
    </location>
    <ligand>
        <name>3'-phosphoadenylyl sulfate</name>
        <dbReference type="ChEBI" id="CHEBI:58339"/>
    </ligand>
</feature>
<feature type="glycosylation site" description="N-linked (GlcNAc...) asparagine" evidence="3">
    <location>
        <position position="254"/>
    </location>
</feature>
<feature type="glycosylation site" description="N-linked (GlcNAc...) asparagine" evidence="3">
    <location>
        <position position="310"/>
    </location>
</feature>
<feature type="sequence conflict" description="In Ref. 2; BAA25761." evidence="7" ref="2">
    <original>TLL</original>
    <variation>ILV</variation>
    <location>
        <begin position="172"/>
        <end position="174"/>
    </location>
</feature>
<feature type="sequence conflict" description="In Ref. 2; BAA25761." evidence="7" ref="2">
    <original>SKR</original>
    <variation>RAA</variation>
    <location>
        <begin position="261"/>
        <end position="263"/>
    </location>
</feature>
<name>H6ST1_CRIGR</name>
<proteinExistence type="evidence at protein level"/>
<reference key="1">
    <citation type="journal article" date="2001" name="J. Biol. Chem.">
        <title>6-O-sulfotransferase-1 represents a critical enzyme in the anticoagulant heparan sulfate biosynthetic pathway.</title>
        <authorList>
            <person name="Zhang L."/>
            <person name="Beeler D.L."/>
            <person name="Lawrence R."/>
            <person name="Lech M."/>
            <person name="Liu J."/>
            <person name="Davis J.C."/>
            <person name="Shriver Z."/>
            <person name="Sasisekharan R."/>
            <person name="Rosenberg R.D."/>
        </authorList>
    </citation>
    <scope>NUCLEOTIDE SEQUENCE [MRNA]</scope>
    <source>
        <tissue>Ovary</tissue>
    </source>
</reference>
<reference key="2">
    <citation type="journal article" date="1998" name="J. Biol. Chem.">
        <title>Molecular characterization and expression of heparan-sulfate 6-sulfotransferase.</title>
        <authorList>
            <person name="Habuchi H."/>
            <person name="Kobayashi M."/>
            <person name="Kimata K."/>
        </authorList>
    </citation>
    <scope>NUCLEOTIDE SEQUENCE [MRNA] OF 28-263</scope>
    <scope>PROTEIN SEQUENCE OF 28-40; 58-65; 95-99; 124-128; 158-163 AND 230-236</scope>
    <source>
        <tissue>Ovary</tissue>
    </source>
</reference>
<reference key="3">
    <citation type="journal article" date="1995" name="J. Biol. Chem.">
        <title>Purification and characterization of heparan sulfate 6-sulfotransferase from the culture medium of Chinese hamster ovary cells.</title>
        <authorList>
            <person name="Habuchi H."/>
            <person name="Habuchi O."/>
            <person name="Kimata K."/>
        </authorList>
    </citation>
    <scope>FUNCTION</scope>
    <scope>ACTIVITY REGULATION</scope>
    <scope>BIOPHYSICOCHEMICAL PROPERTIES</scope>
    <scope>GLYCOSYLATION</scope>
    <scope>CATALYTIC ACTIVITY</scope>
    <source>
        <tissue>Ovary</tissue>
    </source>
</reference>
<keyword id="KW-0903">Direct protein sequencing</keyword>
<keyword id="KW-0325">Glycoprotein</keyword>
<keyword id="KW-0472">Membrane</keyword>
<keyword id="KW-0735">Signal-anchor</keyword>
<keyword id="KW-0808">Transferase</keyword>
<keyword id="KW-0812">Transmembrane</keyword>
<keyword id="KW-1133">Transmembrane helix</keyword>
<dbReference type="EC" id="2.8.2.-" evidence="6"/>
<dbReference type="EMBL" id="AY043180">
    <property type="protein sequence ID" value="AAL05593.1"/>
    <property type="molecule type" value="mRNA"/>
</dbReference>
<dbReference type="EMBL" id="AB006180">
    <property type="protein sequence ID" value="BAA25761.1"/>
    <property type="molecule type" value="mRNA"/>
</dbReference>
<dbReference type="SMR" id="Q91ZB4"/>
<dbReference type="GlyCosmos" id="Q91ZB4">
    <property type="glycosylation" value="2 sites, No reported glycans"/>
</dbReference>
<dbReference type="PaxDb" id="10029-XP_007627101.1"/>
<dbReference type="eggNOG" id="KOG3955">
    <property type="taxonomic scope" value="Eukaryota"/>
</dbReference>
<dbReference type="SABIO-RK" id="Q91ZB4"/>
<dbReference type="Proteomes" id="UP000694386">
    <property type="component" value="Unplaced"/>
</dbReference>
<dbReference type="Proteomes" id="UP001108280">
    <property type="component" value="Unplaced"/>
</dbReference>
<dbReference type="GO" id="GO:0016020">
    <property type="term" value="C:membrane"/>
    <property type="evidence" value="ECO:0007669"/>
    <property type="project" value="UniProtKB-SubCell"/>
</dbReference>
<dbReference type="GO" id="GO:0017095">
    <property type="term" value="F:heparan sulfate 6-sulfotransferase activity"/>
    <property type="evidence" value="ECO:0007669"/>
    <property type="project" value="TreeGrafter"/>
</dbReference>
<dbReference type="GO" id="GO:0048666">
    <property type="term" value="P:neuron development"/>
    <property type="evidence" value="ECO:0000250"/>
    <property type="project" value="UniProtKB"/>
</dbReference>
<dbReference type="FunFam" id="3.40.50.300:FF:000347">
    <property type="entry name" value="Heparan-sulfate 6-O-sulfotransferase"/>
    <property type="match status" value="1"/>
</dbReference>
<dbReference type="Gene3D" id="3.40.50.300">
    <property type="entry name" value="P-loop containing nucleotide triphosphate hydrolases"/>
    <property type="match status" value="1"/>
</dbReference>
<dbReference type="InterPro" id="IPR010635">
    <property type="entry name" value="Heparan_SO4-6-sulfoTrfase"/>
</dbReference>
<dbReference type="InterPro" id="IPR027417">
    <property type="entry name" value="P-loop_NTPase"/>
</dbReference>
<dbReference type="InterPro" id="IPR005331">
    <property type="entry name" value="Sulfotransferase"/>
</dbReference>
<dbReference type="PANTHER" id="PTHR12812">
    <property type="entry name" value="HEPARAN SULFATE 6-O-SULFOTRANSFERASE 3"/>
    <property type="match status" value="1"/>
</dbReference>
<dbReference type="PANTHER" id="PTHR12812:SF1">
    <property type="entry name" value="HEPARAN-SULFATE 6-O-SULFOTRANSFERASE 1"/>
    <property type="match status" value="1"/>
</dbReference>
<dbReference type="Pfam" id="PF03567">
    <property type="entry name" value="Sulfotransfer_2"/>
    <property type="match status" value="1"/>
</dbReference>
<dbReference type="SUPFAM" id="SSF52540">
    <property type="entry name" value="P-loop containing nucleoside triphosphate hydrolases"/>
    <property type="match status" value="1"/>
</dbReference>
<comment type="function">
    <text evidence="5 6">6-O-sulfation enzyme which catalyzes the transfer of sulfate from 3'-phosphoadenosine 5'-phosphosulfate (PAPS) to position 6 of the N-sulfoglucosamine residue (GlcNS) of heparan sulfate. Also transfers sulfate to CDSNS-heparin and performs the crucial step modification in the biosynthesis of anticoagulant heparan sulfate (HSact). Critical for normal neuronal development where it may play a role in neuron branching. May also play a role in limb development. May prefer iduronic acid.</text>
</comment>
<comment type="catalytic activity">
    <reaction evidence="6">
        <text>alpha-D-glucosaminyl-[heparan sulfate](n) + 3'-phosphoadenylyl sulfate = 6-sulfo-alpha-D-glucosaminyl-[heparan sulfate](n) + adenosine 3',5'-bisphosphate + H(+)</text>
        <dbReference type="Rhea" id="RHEA:56604"/>
        <dbReference type="Rhea" id="RHEA-COMP:9830"/>
        <dbReference type="Rhea" id="RHEA-COMP:14621"/>
        <dbReference type="ChEBI" id="CHEBI:15378"/>
        <dbReference type="ChEBI" id="CHEBI:58339"/>
        <dbReference type="ChEBI" id="CHEBI:58343"/>
        <dbReference type="ChEBI" id="CHEBI:58388"/>
        <dbReference type="ChEBI" id="CHEBI:140604"/>
    </reaction>
</comment>
<comment type="activity regulation">
    <text evidence="6">Inhibited by dithiothreitol and stimulated by protamine.</text>
</comment>
<comment type="biophysicochemical properties">
    <kinetics>
        <KM evidence="6">0.44 uM for PAPS</KM>
    </kinetics>
    <phDependence>
        <text evidence="6">Optimum pH is 6.3.</text>
    </phDependence>
</comment>
<comment type="subcellular location">
    <subcellularLocation>
        <location evidence="7">Membrane</location>
        <topology evidence="7">Single-pass type II membrane protein</topology>
    </subcellularLocation>
</comment>
<comment type="PTM">
    <text evidence="6">N-glycosylated.</text>
</comment>
<comment type="similarity">
    <text evidence="7">Belongs to the sulfotransferase 6 family.</text>
</comment>
<evidence type="ECO:0000250" key="1">
    <source>
        <dbReference type="UniProtKB" id="A0MGZ7"/>
    </source>
</evidence>
<evidence type="ECO:0000250" key="2">
    <source>
        <dbReference type="UniProtKB" id="O60243"/>
    </source>
</evidence>
<evidence type="ECO:0000255" key="3"/>
<evidence type="ECO:0000256" key="4">
    <source>
        <dbReference type="SAM" id="MobiDB-lite"/>
    </source>
</evidence>
<evidence type="ECO:0000269" key="5">
    <source>
    </source>
</evidence>
<evidence type="ECO:0000269" key="6">
    <source>
    </source>
</evidence>
<evidence type="ECO:0000305" key="7"/>
<accession>Q91ZB4</accession>
<accession>O70158</accession>
<protein>
    <recommendedName>
        <fullName evidence="2">Heparan-sulfate 6-O-sulfotransferase 1</fullName>
        <shortName>HS6ST-1</shortName>
        <ecNumber evidence="6">2.8.2.-</ecNumber>
    </recommendedName>
</protein>
<organism>
    <name type="scientific">Cricetulus griseus</name>
    <name type="common">Chinese hamster</name>
    <name type="synonym">Cricetulus barabensis griseus</name>
    <dbReference type="NCBI Taxonomy" id="10029"/>
    <lineage>
        <taxon>Eukaryota</taxon>
        <taxon>Metazoa</taxon>
        <taxon>Chordata</taxon>
        <taxon>Craniata</taxon>
        <taxon>Vertebrata</taxon>
        <taxon>Euteleostomi</taxon>
        <taxon>Mammalia</taxon>
        <taxon>Eutheria</taxon>
        <taxon>Euarchontoglires</taxon>
        <taxon>Glires</taxon>
        <taxon>Rodentia</taxon>
        <taxon>Myomorpha</taxon>
        <taxon>Muroidea</taxon>
        <taxon>Cricetidae</taxon>
        <taxon>Cricetinae</taxon>
        <taxon>Cricetulus</taxon>
    </lineage>
</organism>